<proteinExistence type="inferred from homology"/>
<protein>
    <recommendedName>
        <fullName evidence="1">UPF0482 protein YnfB</fullName>
    </recommendedName>
</protein>
<reference key="1">
    <citation type="journal article" date="2008" name="J. Bacteriol.">
        <title>The complete genome sequence of Escherichia coli DH10B: insights into the biology of a laboratory workhorse.</title>
        <authorList>
            <person name="Durfee T."/>
            <person name="Nelson R."/>
            <person name="Baldwin S."/>
            <person name="Plunkett G. III"/>
            <person name="Burland V."/>
            <person name="Mau B."/>
            <person name="Petrosino J.F."/>
            <person name="Qin X."/>
            <person name="Muzny D.M."/>
            <person name="Ayele M."/>
            <person name="Gibbs R.A."/>
            <person name="Csorgo B."/>
            <person name="Posfai G."/>
            <person name="Weinstock G.M."/>
            <person name="Blattner F.R."/>
        </authorList>
    </citation>
    <scope>NUCLEOTIDE SEQUENCE [LARGE SCALE GENOMIC DNA]</scope>
    <source>
        <strain>K12 / DH10B</strain>
    </source>
</reference>
<evidence type="ECO:0000255" key="1">
    <source>
        <dbReference type="HAMAP-Rule" id="MF_01581"/>
    </source>
</evidence>
<sequence length="113" mass="12909">MKITLSKRIGLLAILLPCALALSTTVHAETNKLVIESGDSAQSRQHAAMEKEQWNDTRNLRQKVNKRTEKEWDKADAAFDNRDKCEQSANINAYWEPNTLRCLDRRTGRVITP</sequence>
<name>YNFB_ECODH</name>
<comment type="similarity">
    <text evidence="1">Belongs to the UPF0482 family.</text>
</comment>
<keyword id="KW-0732">Signal</keyword>
<dbReference type="EMBL" id="CP000948">
    <property type="protein sequence ID" value="ACB02789.1"/>
    <property type="molecule type" value="Genomic_DNA"/>
</dbReference>
<dbReference type="RefSeq" id="WP_000705211.1">
    <property type="nucleotide sequence ID" value="NC_010473.1"/>
</dbReference>
<dbReference type="KEGG" id="ecd:ECDH10B_1716"/>
<dbReference type="HOGENOM" id="CLU_167574_0_0_6"/>
<dbReference type="HAMAP" id="MF_01581">
    <property type="entry name" value="UPF0482"/>
    <property type="match status" value="1"/>
</dbReference>
<dbReference type="InterPro" id="IPR009700">
    <property type="entry name" value="DUF1283"/>
</dbReference>
<dbReference type="NCBIfam" id="NF010180">
    <property type="entry name" value="PRK13659.1"/>
    <property type="match status" value="1"/>
</dbReference>
<dbReference type="Pfam" id="PF06932">
    <property type="entry name" value="DUF1283"/>
    <property type="match status" value="1"/>
</dbReference>
<accession>B1XF48</accession>
<organism>
    <name type="scientific">Escherichia coli (strain K12 / DH10B)</name>
    <dbReference type="NCBI Taxonomy" id="316385"/>
    <lineage>
        <taxon>Bacteria</taxon>
        <taxon>Pseudomonadati</taxon>
        <taxon>Pseudomonadota</taxon>
        <taxon>Gammaproteobacteria</taxon>
        <taxon>Enterobacterales</taxon>
        <taxon>Enterobacteriaceae</taxon>
        <taxon>Escherichia</taxon>
    </lineage>
</organism>
<feature type="signal peptide" evidence="1">
    <location>
        <begin position="1"/>
        <end position="28"/>
    </location>
</feature>
<feature type="chain" id="PRO_0000349093" description="UPF0482 protein YnfB">
    <location>
        <begin position="29"/>
        <end position="113"/>
    </location>
</feature>
<gene>
    <name evidence="1" type="primary">ynfB</name>
    <name type="ordered locus">ECDH10B_1716</name>
</gene>